<feature type="chain" id="PRO_0000029699" description="Phosphatidylserine decarboxylase beta chain" evidence="1">
    <location>
        <begin position="1"/>
        <end position="253"/>
    </location>
</feature>
<feature type="chain" id="PRO_0000029700" description="Phosphatidylserine decarboxylase alpha chain" evidence="1">
    <location>
        <begin position="254"/>
        <end position="322"/>
    </location>
</feature>
<feature type="region of interest" description="Disordered" evidence="2">
    <location>
        <begin position="293"/>
        <end position="322"/>
    </location>
</feature>
<feature type="compositionally biased region" description="Basic and acidic residues" evidence="2">
    <location>
        <begin position="308"/>
        <end position="322"/>
    </location>
</feature>
<feature type="active site" description="Charge relay system; for autoendoproteolytic cleavage activity" evidence="1">
    <location>
        <position position="90"/>
    </location>
</feature>
<feature type="active site" description="Charge relay system; for autoendoproteolytic cleavage activity" evidence="1">
    <location>
        <position position="147"/>
    </location>
</feature>
<feature type="active site" description="Charge relay system; for autoendoproteolytic cleavage activity" evidence="1">
    <location>
        <position position="254"/>
    </location>
</feature>
<feature type="active site" description="Schiff-base intermediate with substrate; via pyruvic acid; for decarboxylase activity" evidence="1">
    <location>
        <position position="254"/>
    </location>
</feature>
<feature type="site" description="Cleavage (non-hydrolytic); by autocatalysis" evidence="1">
    <location>
        <begin position="253"/>
        <end position="254"/>
    </location>
</feature>
<feature type="modified residue" description="Pyruvic acid (Ser); by autocatalysis" evidence="1">
    <location>
        <position position="254"/>
    </location>
</feature>
<protein>
    <recommendedName>
        <fullName evidence="1">Phosphatidylserine decarboxylase proenzyme</fullName>
        <ecNumber evidence="1">4.1.1.65</ecNumber>
    </recommendedName>
    <component>
        <recommendedName>
            <fullName evidence="1">Phosphatidylserine decarboxylase alpha chain</fullName>
        </recommendedName>
    </component>
    <component>
        <recommendedName>
            <fullName evidence="1">Phosphatidylserine decarboxylase beta chain</fullName>
        </recommendedName>
    </component>
</protein>
<name>PSD_SHIFL</name>
<keyword id="KW-1003">Cell membrane</keyword>
<keyword id="KW-0210">Decarboxylase</keyword>
<keyword id="KW-0444">Lipid biosynthesis</keyword>
<keyword id="KW-0443">Lipid metabolism</keyword>
<keyword id="KW-0456">Lyase</keyword>
<keyword id="KW-0472">Membrane</keyword>
<keyword id="KW-0594">Phospholipid biosynthesis</keyword>
<keyword id="KW-1208">Phospholipid metabolism</keyword>
<keyword id="KW-0670">Pyruvate</keyword>
<keyword id="KW-1185">Reference proteome</keyword>
<keyword id="KW-0865">Zymogen</keyword>
<comment type="function">
    <text evidence="1">Catalyzes the formation of phosphatidylethanolamine (PtdEtn) from phosphatidylserine (PtdSer).</text>
</comment>
<comment type="catalytic activity">
    <reaction evidence="1">
        <text>a 1,2-diacyl-sn-glycero-3-phospho-L-serine + H(+) = a 1,2-diacyl-sn-glycero-3-phosphoethanolamine + CO2</text>
        <dbReference type="Rhea" id="RHEA:20828"/>
        <dbReference type="ChEBI" id="CHEBI:15378"/>
        <dbReference type="ChEBI" id="CHEBI:16526"/>
        <dbReference type="ChEBI" id="CHEBI:57262"/>
        <dbReference type="ChEBI" id="CHEBI:64612"/>
        <dbReference type="EC" id="4.1.1.65"/>
    </reaction>
</comment>
<comment type="cofactor">
    <cofactor evidence="1">
        <name>pyruvate</name>
        <dbReference type="ChEBI" id="CHEBI:15361"/>
    </cofactor>
    <text evidence="1">Binds 1 pyruvoyl group covalently per subunit.</text>
</comment>
<comment type="pathway">
    <text evidence="1">Phospholipid metabolism; phosphatidylethanolamine biosynthesis; phosphatidylethanolamine from CDP-diacylglycerol: step 2/2.</text>
</comment>
<comment type="subunit">
    <text evidence="1">Heterodimer of a large membrane-associated beta subunit and a small pyruvoyl-containing alpha subunit.</text>
</comment>
<comment type="subcellular location">
    <subcellularLocation>
        <location evidence="1">Cell membrane</location>
        <topology evidence="1">Peripheral membrane protein</topology>
    </subcellularLocation>
</comment>
<comment type="PTM">
    <text evidence="1">Is synthesized initially as an inactive proenzyme. Formation of the active enzyme involves a self-maturation process in which the active site pyruvoyl group is generated from an internal serine residue via an autocatalytic post-translational modification. Two non-identical subunits are generated from the proenzyme in this reaction, and the pyruvate is formed at the N-terminus of the alpha chain, which is derived from the carboxyl end of the proenzyme. The autoendoproteolytic cleavage occurs by a canonical serine protease mechanism, in which the side chain hydroxyl group of the serine supplies its oxygen atom to form the C-terminus of the beta chain, while the remainder of the serine residue undergoes an oxidative deamination to produce ammonia and the pyruvoyl prosthetic group on the alpha chain. During this reaction, the Ser that is part of the protease active site of the proenzyme becomes the pyruvoyl prosthetic group, which constitutes an essential element of the active site of the mature decarboxylase.</text>
</comment>
<comment type="similarity">
    <text evidence="1">Belongs to the phosphatidylserine decarboxylase family. PSD-B subfamily. Prokaryotic type I sub-subfamily.</text>
</comment>
<evidence type="ECO:0000255" key="1">
    <source>
        <dbReference type="HAMAP-Rule" id="MF_00662"/>
    </source>
</evidence>
<evidence type="ECO:0000256" key="2">
    <source>
        <dbReference type="SAM" id="MobiDB-lite"/>
    </source>
</evidence>
<reference key="1">
    <citation type="journal article" date="2002" name="Nucleic Acids Res.">
        <title>Genome sequence of Shigella flexneri 2a: insights into pathogenicity through comparison with genomes of Escherichia coli K12 and O157.</title>
        <authorList>
            <person name="Jin Q."/>
            <person name="Yuan Z."/>
            <person name="Xu J."/>
            <person name="Wang Y."/>
            <person name="Shen Y."/>
            <person name="Lu W."/>
            <person name="Wang J."/>
            <person name="Liu H."/>
            <person name="Yang J."/>
            <person name="Yang F."/>
            <person name="Zhang X."/>
            <person name="Zhang J."/>
            <person name="Yang G."/>
            <person name="Wu H."/>
            <person name="Qu D."/>
            <person name="Dong J."/>
            <person name="Sun L."/>
            <person name="Xue Y."/>
            <person name="Zhao A."/>
            <person name="Gao Y."/>
            <person name="Zhu J."/>
            <person name="Kan B."/>
            <person name="Ding K."/>
            <person name="Chen S."/>
            <person name="Cheng H."/>
            <person name="Yao Z."/>
            <person name="He B."/>
            <person name="Chen R."/>
            <person name="Ma D."/>
            <person name="Qiang B."/>
            <person name="Wen Y."/>
            <person name="Hou Y."/>
            <person name="Yu J."/>
        </authorList>
    </citation>
    <scope>NUCLEOTIDE SEQUENCE [LARGE SCALE GENOMIC DNA]</scope>
    <source>
        <strain>301 / Serotype 2a</strain>
    </source>
</reference>
<reference key="2">
    <citation type="journal article" date="2003" name="Infect. Immun.">
        <title>Complete genome sequence and comparative genomics of Shigella flexneri serotype 2a strain 2457T.</title>
        <authorList>
            <person name="Wei J."/>
            <person name="Goldberg M.B."/>
            <person name="Burland V."/>
            <person name="Venkatesan M.M."/>
            <person name="Deng W."/>
            <person name="Fournier G."/>
            <person name="Mayhew G.F."/>
            <person name="Plunkett G. III"/>
            <person name="Rose D.J."/>
            <person name="Darling A."/>
            <person name="Mau B."/>
            <person name="Perna N.T."/>
            <person name="Payne S.M."/>
            <person name="Runyen-Janecky L.J."/>
            <person name="Zhou S."/>
            <person name="Schwartz D.C."/>
            <person name="Blattner F.R."/>
        </authorList>
    </citation>
    <scope>NUCLEOTIDE SEQUENCE [LARGE SCALE GENOMIC DNA]</scope>
    <source>
        <strain>ATCC 700930 / 2457T / Serotype 2a</strain>
    </source>
</reference>
<gene>
    <name evidence="1" type="primary">psd</name>
    <name type="ordered locus">SF4318</name>
    <name type="ordered locus">S4582</name>
</gene>
<accession>P0A8K4</accession>
<accession>P10740</accession>
<proteinExistence type="inferred from homology"/>
<dbReference type="EC" id="4.1.1.65" evidence="1"/>
<dbReference type="EMBL" id="AE005674">
    <property type="protein sequence ID" value="AAN45735.1"/>
    <property type="molecule type" value="Genomic_DNA"/>
</dbReference>
<dbReference type="EMBL" id="AE014073">
    <property type="protein sequence ID" value="AAP19518.1"/>
    <property type="molecule type" value="Genomic_DNA"/>
</dbReference>
<dbReference type="RefSeq" id="NP_710028.1">
    <property type="nucleotide sequence ID" value="NC_004337.2"/>
</dbReference>
<dbReference type="SMR" id="P0A8K4"/>
<dbReference type="STRING" id="198214.SF4318"/>
<dbReference type="PaxDb" id="198214-SF4318"/>
<dbReference type="GeneID" id="1023588"/>
<dbReference type="KEGG" id="sfl:SF4318"/>
<dbReference type="KEGG" id="sfx:S4582"/>
<dbReference type="PATRIC" id="fig|198214.7.peg.5092"/>
<dbReference type="HOGENOM" id="CLU_029061_4_1_6"/>
<dbReference type="UniPathway" id="UPA00558">
    <property type="reaction ID" value="UER00616"/>
</dbReference>
<dbReference type="Proteomes" id="UP000001006">
    <property type="component" value="Chromosome"/>
</dbReference>
<dbReference type="Proteomes" id="UP000002673">
    <property type="component" value="Chromosome"/>
</dbReference>
<dbReference type="GO" id="GO:0005886">
    <property type="term" value="C:plasma membrane"/>
    <property type="evidence" value="ECO:0007669"/>
    <property type="project" value="UniProtKB-SubCell"/>
</dbReference>
<dbReference type="GO" id="GO:0004609">
    <property type="term" value="F:phosphatidylserine decarboxylase activity"/>
    <property type="evidence" value="ECO:0007669"/>
    <property type="project" value="UniProtKB-UniRule"/>
</dbReference>
<dbReference type="GO" id="GO:0006646">
    <property type="term" value="P:phosphatidylethanolamine biosynthetic process"/>
    <property type="evidence" value="ECO:0007669"/>
    <property type="project" value="UniProtKB-UniRule"/>
</dbReference>
<dbReference type="HAMAP" id="MF_00662">
    <property type="entry name" value="PS_decarb_PSD_B_type1"/>
    <property type="match status" value="1"/>
</dbReference>
<dbReference type="InterPro" id="IPR003817">
    <property type="entry name" value="PS_Dcarbxylase"/>
</dbReference>
<dbReference type="InterPro" id="IPR033177">
    <property type="entry name" value="PSD-B"/>
</dbReference>
<dbReference type="InterPro" id="IPR033178">
    <property type="entry name" value="PSD_type1_pro"/>
</dbReference>
<dbReference type="NCBIfam" id="TIGR00163">
    <property type="entry name" value="PS_decarb"/>
    <property type="match status" value="1"/>
</dbReference>
<dbReference type="PANTHER" id="PTHR10067">
    <property type="entry name" value="PHOSPHATIDYLSERINE DECARBOXYLASE"/>
    <property type="match status" value="1"/>
</dbReference>
<dbReference type="PANTHER" id="PTHR10067:SF6">
    <property type="entry name" value="PHOSPHATIDYLSERINE DECARBOXYLASE PROENZYME, MITOCHONDRIAL"/>
    <property type="match status" value="1"/>
</dbReference>
<dbReference type="Pfam" id="PF02666">
    <property type="entry name" value="PS_Dcarbxylase"/>
    <property type="match status" value="1"/>
</dbReference>
<organism>
    <name type="scientific">Shigella flexneri</name>
    <dbReference type="NCBI Taxonomy" id="623"/>
    <lineage>
        <taxon>Bacteria</taxon>
        <taxon>Pseudomonadati</taxon>
        <taxon>Pseudomonadota</taxon>
        <taxon>Gammaproteobacteria</taxon>
        <taxon>Enterobacterales</taxon>
        <taxon>Enterobacteriaceae</taxon>
        <taxon>Shigella</taxon>
    </lineage>
</organism>
<sequence length="322" mass="35934">MLNSFKLSLQYILPKLWLTRLAGWGASKRAGWLTKLVIDLFVKYYKVDMKEAQKPDTASYRTFNEFFVRPLRDEVRPIDTDPNVLVMPADGVISQLGKIEEDKILQAKGHNYSLEALLAGNYLMADLFRNGTFVTTYLSPRDYHRVHMPCNGILREMIYVPGDLFSVNHLTAQNVPNLFARNERVICLFDTEFGPMAQILVGATIVGSIETVWAGTITPPREGIIKRWTWPAGENDGSVALLKGQEMGRFKLGSTVINLFAPGKVNLVEQLESLSVTKIGQPLAVSTETFVTPDAEPAPLPAEEIEAEHDASPLVDDKKDQV</sequence>